<evidence type="ECO:0000255" key="1">
    <source>
        <dbReference type="HAMAP-Rule" id="MF_00168"/>
    </source>
</evidence>
<accession>Q3BS37</accession>
<organism>
    <name type="scientific">Xanthomonas euvesicatoria pv. vesicatoria (strain 85-10)</name>
    <name type="common">Xanthomonas campestris pv. vesicatoria</name>
    <dbReference type="NCBI Taxonomy" id="316273"/>
    <lineage>
        <taxon>Bacteria</taxon>
        <taxon>Pseudomonadati</taxon>
        <taxon>Pseudomonadota</taxon>
        <taxon>Gammaproteobacteria</taxon>
        <taxon>Lysobacterales</taxon>
        <taxon>Lysobacteraceae</taxon>
        <taxon>Xanthomonas</taxon>
    </lineage>
</organism>
<gene>
    <name evidence="1" type="primary">tgt</name>
    <name type="ordered locus">XCV2695</name>
</gene>
<dbReference type="EC" id="2.4.2.29" evidence="1"/>
<dbReference type="EMBL" id="AM039952">
    <property type="protein sequence ID" value="CAJ24372.1"/>
    <property type="molecule type" value="Genomic_DNA"/>
</dbReference>
<dbReference type="RefSeq" id="WP_011347823.1">
    <property type="nucleotide sequence ID" value="NZ_CP017190.1"/>
</dbReference>
<dbReference type="SMR" id="Q3BS37"/>
<dbReference type="STRING" id="456327.BJD11_09390"/>
<dbReference type="KEGG" id="xcv:XCV2695"/>
<dbReference type="eggNOG" id="COG0343">
    <property type="taxonomic scope" value="Bacteria"/>
</dbReference>
<dbReference type="HOGENOM" id="CLU_022060_0_1_6"/>
<dbReference type="UniPathway" id="UPA00392"/>
<dbReference type="Proteomes" id="UP000007069">
    <property type="component" value="Chromosome"/>
</dbReference>
<dbReference type="GO" id="GO:0005829">
    <property type="term" value="C:cytosol"/>
    <property type="evidence" value="ECO:0007669"/>
    <property type="project" value="TreeGrafter"/>
</dbReference>
<dbReference type="GO" id="GO:0046872">
    <property type="term" value="F:metal ion binding"/>
    <property type="evidence" value="ECO:0007669"/>
    <property type="project" value="UniProtKB-KW"/>
</dbReference>
<dbReference type="GO" id="GO:0008479">
    <property type="term" value="F:tRNA-guanosine(34) queuine transglycosylase activity"/>
    <property type="evidence" value="ECO:0007669"/>
    <property type="project" value="UniProtKB-UniRule"/>
</dbReference>
<dbReference type="GO" id="GO:0008616">
    <property type="term" value="P:queuosine biosynthetic process"/>
    <property type="evidence" value="ECO:0007669"/>
    <property type="project" value="UniProtKB-UniRule"/>
</dbReference>
<dbReference type="GO" id="GO:0002099">
    <property type="term" value="P:tRNA wobble guanine modification"/>
    <property type="evidence" value="ECO:0007669"/>
    <property type="project" value="TreeGrafter"/>
</dbReference>
<dbReference type="GO" id="GO:0101030">
    <property type="term" value="P:tRNA-guanine transglycosylation"/>
    <property type="evidence" value="ECO:0007669"/>
    <property type="project" value="InterPro"/>
</dbReference>
<dbReference type="FunFam" id="3.20.20.105:FF:000001">
    <property type="entry name" value="Queuine tRNA-ribosyltransferase"/>
    <property type="match status" value="1"/>
</dbReference>
<dbReference type="Gene3D" id="3.20.20.105">
    <property type="entry name" value="Queuine tRNA-ribosyltransferase-like"/>
    <property type="match status" value="1"/>
</dbReference>
<dbReference type="HAMAP" id="MF_00168">
    <property type="entry name" value="Q_tRNA_Tgt"/>
    <property type="match status" value="1"/>
</dbReference>
<dbReference type="InterPro" id="IPR050076">
    <property type="entry name" value="ArchSynthase1/Queuine_TRR"/>
</dbReference>
<dbReference type="InterPro" id="IPR004803">
    <property type="entry name" value="TGT"/>
</dbReference>
<dbReference type="InterPro" id="IPR036511">
    <property type="entry name" value="TGT-like_sf"/>
</dbReference>
<dbReference type="InterPro" id="IPR002616">
    <property type="entry name" value="tRNA_ribo_trans-like"/>
</dbReference>
<dbReference type="NCBIfam" id="TIGR00430">
    <property type="entry name" value="Q_tRNA_tgt"/>
    <property type="match status" value="1"/>
</dbReference>
<dbReference type="NCBIfam" id="TIGR00449">
    <property type="entry name" value="tgt_general"/>
    <property type="match status" value="1"/>
</dbReference>
<dbReference type="PANTHER" id="PTHR46499">
    <property type="entry name" value="QUEUINE TRNA-RIBOSYLTRANSFERASE"/>
    <property type="match status" value="1"/>
</dbReference>
<dbReference type="PANTHER" id="PTHR46499:SF1">
    <property type="entry name" value="QUEUINE TRNA-RIBOSYLTRANSFERASE"/>
    <property type="match status" value="1"/>
</dbReference>
<dbReference type="Pfam" id="PF01702">
    <property type="entry name" value="TGT"/>
    <property type="match status" value="1"/>
</dbReference>
<dbReference type="SUPFAM" id="SSF51713">
    <property type="entry name" value="tRNA-guanine transglycosylase"/>
    <property type="match status" value="1"/>
</dbReference>
<feature type="chain" id="PRO_1000016888" description="Queuine tRNA-ribosyltransferase">
    <location>
        <begin position="1"/>
        <end position="381"/>
    </location>
</feature>
<feature type="region of interest" description="RNA binding" evidence="1">
    <location>
        <begin position="248"/>
        <end position="254"/>
    </location>
</feature>
<feature type="region of interest" description="RNA binding; important for wobble base 34 recognition" evidence="1">
    <location>
        <begin position="272"/>
        <end position="276"/>
    </location>
</feature>
<feature type="active site" description="Proton acceptor" evidence="1">
    <location>
        <position position="92"/>
    </location>
</feature>
<feature type="active site" description="Nucleophile" evidence="1">
    <location>
        <position position="267"/>
    </location>
</feature>
<feature type="binding site" evidence="1">
    <location>
        <begin position="92"/>
        <end position="96"/>
    </location>
    <ligand>
        <name>substrate</name>
    </ligand>
</feature>
<feature type="binding site" evidence="1">
    <location>
        <position position="146"/>
    </location>
    <ligand>
        <name>substrate</name>
    </ligand>
</feature>
<feature type="binding site" evidence="1">
    <location>
        <position position="190"/>
    </location>
    <ligand>
        <name>substrate</name>
    </ligand>
</feature>
<feature type="binding site" evidence="1">
    <location>
        <position position="217"/>
    </location>
    <ligand>
        <name>substrate</name>
    </ligand>
</feature>
<feature type="binding site" evidence="1">
    <location>
        <position position="305"/>
    </location>
    <ligand>
        <name>Zn(2+)</name>
        <dbReference type="ChEBI" id="CHEBI:29105"/>
    </ligand>
</feature>
<feature type="binding site" evidence="1">
    <location>
        <position position="307"/>
    </location>
    <ligand>
        <name>Zn(2+)</name>
        <dbReference type="ChEBI" id="CHEBI:29105"/>
    </ligand>
</feature>
<feature type="binding site" evidence="1">
    <location>
        <position position="310"/>
    </location>
    <ligand>
        <name>Zn(2+)</name>
        <dbReference type="ChEBI" id="CHEBI:29105"/>
    </ligand>
</feature>
<feature type="binding site" evidence="1">
    <location>
        <position position="337"/>
    </location>
    <ligand>
        <name>Zn(2+)</name>
        <dbReference type="ChEBI" id="CHEBI:29105"/>
    </ligand>
</feature>
<keyword id="KW-0328">Glycosyltransferase</keyword>
<keyword id="KW-0479">Metal-binding</keyword>
<keyword id="KW-0671">Queuosine biosynthesis</keyword>
<keyword id="KW-0808">Transferase</keyword>
<keyword id="KW-0819">tRNA processing</keyword>
<keyword id="KW-0862">Zinc</keyword>
<comment type="function">
    <text evidence="1">Catalyzes the base-exchange of a guanine (G) residue with the queuine precursor 7-aminomethyl-7-deazaguanine (PreQ1) at position 34 (anticodon wobble position) in tRNAs with GU(N) anticodons (tRNA-Asp, -Asn, -His and -Tyr). Catalysis occurs through a double-displacement mechanism. The nucleophile active site attacks the C1' of nucleotide 34 to detach the guanine base from the RNA, forming a covalent enzyme-RNA intermediate. The proton acceptor active site deprotonates the incoming PreQ1, allowing a nucleophilic attack on the C1' of the ribose to form the product. After dissociation, two additional enzymatic reactions on the tRNA convert PreQ1 to queuine (Q), resulting in the hypermodified nucleoside queuosine (7-(((4,5-cis-dihydroxy-2-cyclopenten-1-yl)amino)methyl)-7-deazaguanosine).</text>
</comment>
<comment type="catalytic activity">
    <reaction evidence="1">
        <text>7-aminomethyl-7-carbaguanine + guanosine(34) in tRNA = 7-aminomethyl-7-carbaguanosine(34) in tRNA + guanine</text>
        <dbReference type="Rhea" id="RHEA:24104"/>
        <dbReference type="Rhea" id="RHEA-COMP:10341"/>
        <dbReference type="Rhea" id="RHEA-COMP:10342"/>
        <dbReference type="ChEBI" id="CHEBI:16235"/>
        <dbReference type="ChEBI" id="CHEBI:58703"/>
        <dbReference type="ChEBI" id="CHEBI:74269"/>
        <dbReference type="ChEBI" id="CHEBI:82833"/>
        <dbReference type="EC" id="2.4.2.29"/>
    </reaction>
</comment>
<comment type="cofactor">
    <cofactor evidence="1">
        <name>Zn(2+)</name>
        <dbReference type="ChEBI" id="CHEBI:29105"/>
    </cofactor>
    <text evidence="1">Binds 1 zinc ion per subunit.</text>
</comment>
<comment type="pathway">
    <text evidence="1">tRNA modification; tRNA-queuosine biosynthesis.</text>
</comment>
<comment type="subunit">
    <text evidence="1">Homodimer. Within each dimer, one monomer is responsible for RNA recognition and catalysis, while the other monomer binds to the replacement base PreQ1.</text>
</comment>
<comment type="similarity">
    <text evidence="1">Belongs to the queuine tRNA-ribosyltransferase family.</text>
</comment>
<protein>
    <recommendedName>
        <fullName evidence="1">Queuine tRNA-ribosyltransferase</fullName>
        <ecNumber evidence="1">2.4.2.29</ecNumber>
    </recommendedName>
    <alternativeName>
        <fullName evidence="1">Guanine insertion enzyme</fullName>
    </alternativeName>
    <alternativeName>
        <fullName evidence="1">tRNA-guanine transglycosylase</fullName>
    </alternativeName>
</protein>
<sequence length="381" mass="42029">MSRLQFQLQATDGHARRGRLTFPRGTVETPAFMPVGTYGSVKGILPEQIRALGAEIILGNTFHLYLRPGLEVIGDHGGLHGFARWDGPILTDSGGFQVFSLAHRRKITEQGVTFSSPTDGARVFLGPEESMKIQKVLDSDIVMIFDECTPYPATEDVARRSMELSLRWAQRSRDAHDGLGNDAALFGIVQGGVHPDLRSRSLDGLQGIGFDGYAIGGLAVGEPEHERNAMLEHLHPRLPAERPRYLMGVGRPEDLVEGVARGVDMFDCVMPTRNARNGHYFTSFGTVRIRNAKYERDLDTIEPGCGCHACSSGYTRAYLRHLDRCNEMLAPMLGTLHNLCYYEKLMADMRAAIASGTFVEFRRSFYAARGATTPPLPGETS</sequence>
<reference key="1">
    <citation type="journal article" date="2005" name="J. Bacteriol.">
        <title>Insights into genome plasticity and pathogenicity of the plant pathogenic Bacterium Xanthomonas campestris pv. vesicatoria revealed by the complete genome sequence.</title>
        <authorList>
            <person name="Thieme F."/>
            <person name="Koebnik R."/>
            <person name="Bekel T."/>
            <person name="Berger C."/>
            <person name="Boch J."/>
            <person name="Buettner D."/>
            <person name="Caldana C."/>
            <person name="Gaigalat L."/>
            <person name="Goesmann A."/>
            <person name="Kay S."/>
            <person name="Kirchner O."/>
            <person name="Lanz C."/>
            <person name="Linke B."/>
            <person name="McHardy A.C."/>
            <person name="Meyer F."/>
            <person name="Mittenhuber G."/>
            <person name="Nies D.H."/>
            <person name="Niesbach-Kloesgen U."/>
            <person name="Patschkowski T."/>
            <person name="Rueckert C."/>
            <person name="Rupp O."/>
            <person name="Schneiker S."/>
            <person name="Schuster S.C."/>
            <person name="Vorhoelter F.J."/>
            <person name="Weber E."/>
            <person name="Puehler A."/>
            <person name="Bonas U."/>
            <person name="Bartels D."/>
            <person name="Kaiser O."/>
        </authorList>
    </citation>
    <scope>NUCLEOTIDE SEQUENCE [LARGE SCALE GENOMIC DNA]</scope>
    <source>
        <strain>85-10</strain>
    </source>
</reference>
<proteinExistence type="inferred from homology"/>
<name>TGT_XANE5</name>